<protein>
    <recommendedName>
        <fullName>Antigenic heat-stable 120 kDa protein</fullName>
    </recommendedName>
    <alternativeName>
        <fullName>120 kDa antigen</fullName>
    </alternativeName>
    <alternativeName>
        <fullName>Protein PS 120</fullName>
        <shortName>PS120</shortName>
    </alternativeName>
    <alternativeName>
        <fullName>RCA</fullName>
    </alternativeName>
</protein>
<name>SCA4_RICCN</name>
<keyword id="KW-0963">Cytoplasm</keyword>
<accession>Q52658</accession>
<proteinExistence type="predicted"/>
<evidence type="ECO:0000256" key="1">
    <source>
        <dbReference type="SAM" id="MobiDB-lite"/>
    </source>
</evidence>
<evidence type="ECO:0000305" key="2"/>
<sequence>MSKDGNLDTSEFDPLANKEYTEEQKQTLEQEQKEFLSQTTTPALEADDGFIVTSASFAQSTPSMSALSGNISPDSQTSDPITKAVRETIIQPQKDNLIEQILKDLAALTDRDLAEQKRKEIEEEKEKDKTLSTFFGNPANREFIDKALENPELKKKLESIEIAGYKNVHNTFSAASGYPGGFKPVQWENHVSANDLRATVVKNDAGDELCTLNETTVKTKPFTLAKQDGTQVQISSYREIDFPIKLDKADGSMHLSMVALKADGTKPSKDKAVYFTAHYEEGPNGKPQLKEISSPKPLKFAGTGDDAIAYIEHGGEIYTLAVTRGKYKEMMKEVELNQGQSVDLSQAEDIIIGQGQSKEQPLITPQQTTSSSVEPPQYKQQVPPITPTNQPLQPETSQMPQSQQVNPNLLNTATALSGSMQDLLNYVNAGLTKAIDSNKQIDLIKEAATAILNNEKSDIAEKQANIIALAENTVNNKNLKPDAKVTGVNAVLETIKNDQNTPNLEKSKMLEATVAIVLNSENLEPKQKQQMLEKAVDVGLSLKDDASRAAAIDGIKDVVIKSNLSPEDKMLIAVGDKVNVSELSNAEKQKLLGSVLKKGVEAQVLSPAQQQLMQQHLYKIMAEQTKKDTIKKVNDILFDPLSNTELKTTNIQAITSNVLDGPATAEVKGEIIQAITNTIAGSSLEAQDKAAIIKGVGETIATHSDTSLSLPNKALIMASAEKGIAESQTNLPDRELMTKGLVDGIYEGKGGPEITKAVSSGIDNSNINDSEKEALKKAKDAASEAALDRDTQNLTEGFKGQNIEEHKPHDDIYNKAREVINAVNPVIEALEKSKEPVVSAEERIVQETSSILNNISKLAVEKVNNFRAMLSPNGNLKTLEEKKEEAIKKVDELVKAFGTKSSTEEQQSFIKTNLIDDKTLSKEVRLQTIDKLLQEQKRSEAIENPSVKTEDVRVVSGKSKLKPISKDNPDIEKAKMVVGRDRVNIKGNIKIMGALMNARDIIQSENLNKSTPIKRESSPPQR</sequence>
<gene>
    <name type="primary">sca4</name>
    <name type="ordered locus">RC0667</name>
</gene>
<reference key="1">
    <citation type="journal article" date="1994" name="Infect. Immun.">
        <title>Cloning, sequencing, and expression of the gene coding for an antigenic 120-kilodalton protein of Rickettsia conorii.</title>
        <authorList>
            <person name="Schuenke K.W."/>
            <person name="Walker D.H."/>
        </authorList>
    </citation>
    <scope>NUCLEOTIDE SEQUENCE [GENOMIC DNA]</scope>
    <source>
        <strain>ATCC VR-613 / Malish 7</strain>
    </source>
</reference>
<reference key="2">
    <citation type="journal article" date="2001" name="Science">
        <title>Mechanisms of evolution in Rickettsia conorii and R. prowazekii.</title>
        <authorList>
            <person name="Ogata H."/>
            <person name="Audic S."/>
            <person name="Renesto-Audiffren P."/>
            <person name="Fournier P.-E."/>
            <person name="Barbe V."/>
            <person name="Samson D."/>
            <person name="Roux V."/>
            <person name="Cossart P."/>
            <person name="Weissenbach J."/>
            <person name="Claverie J.-M."/>
            <person name="Raoult D."/>
        </authorList>
    </citation>
    <scope>NUCLEOTIDE SEQUENCE [LARGE SCALE GENOMIC DNA]</scope>
    <source>
        <strain>ATCC VR-613 / Malish 7</strain>
    </source>
</reference>
<organism>
    <name type="scientific">Rickettsia conorii (strain ATCC VR-613 / Malish 7)</name>
    <dbReference type="NCBI Taxonomy" id="272944"/>
    <lineage>
        <taxon>Bacteria</taxon>
        <taxon>Pseudomonadati</taxon>
        <taxon>Pseudomonadota</taxon>
        <taxon>Alphaproteobacteria</taxon>
        <taxon>Rickettsiales</taxon>
        <taxon>Rickettsiaceae</taxon>
        <taxon>Rickettsieae</taxon>
        <taxon>Rickettsia</taxon>
        <taxon>spotted fever group</taxon>
    </lineage>
</organism>
<comment type="subcellular location">
    <subcellularLocation>
        <location evidence="2">Cytoplasm</location>
    </subcellularLocation>
</comment>
<comment type="sequence caution" evidence="2">
    <conflict type="erroneous initiation">
        <sequence resource="EMBL-CDS" id="AAL03205"/>
    </conflict>
</comment>
<feature type="chain" id="PRO_0000097610" description="Antigenic heat-stable 120 kDa protein">
    <location>
        <begin position="1"/>
        <end position="1022"/>
    </location>
</feature>
<feature type="region of interest" description="Disordered" evidence="1">
    <location>
        <begin position="1"/>
        <end position="41"/>
    </location>
</feature>
<feature type="region of interest" description="Disordered" evidence="1">
    <location>
        <begin position="355"/>
        <end position="403"/>
    </location>
</feature>
<feature type="compositionally biased region" description="Basic and acidic residues" evidence="1">
    <location>
        <begin position="19"/>
        <end position="34"/>
    </location>
</feature>
<feature type="compositionally biased region" description="Polar residues" evidence="1">
    <location>
        <begin position="355"/>
        <end position="380"/>
    </location>
</feature>
<feature type="compositionally biased region" description="Polar residues" evidence="1">
    <location>
        <begin position="387"/>
        <end position="403"/>
    </location>
</feature>
<dbReference type="EMBL" id="U01133">
    <property type="protein sequence ID" value="AAA18636.1"/>
    <property type="molecule type" value="Unassigned_DNA"/>
</dbReference>
<dbReference type="EMBL" id="AE006914">
    <property type="protein sequence ID" value="AAL03205.1"/>
    <property type="status" value="ALT_INIT"/>
    <property type="molecule type" value="Genomic_DNA"/>
</dbReference>
<dbReference type="PIR" id="C97783">
    <property type="entry name" value="C97783"/>
</dbReference>
<dbReference type="RefSeq" id="WP_081420739.1">
    <property type="nucleotide sequence ID" value="NC_003103.1"/>
</dbReference>
<dbReference type="SMR" id="Q52658"/>
<dbReference type="GeneID" id="927844"/>
<dbReference type="KEGG" id="rco:RC0667"/>
<dbReference type="HOGENOM" id="CLU_009206_0_0_5"/>
<dbReference type="Proteomes" id="UP000000816">
    <property type="component" value="Chromosome"/>
</dbReference>
<dbReference type="GO" id="GO:0005737">
    <property type="term" value="C:cytoplasm"/>
    <property type="evidence" value="ECO:0007669"/>
    <property type="project" value="UniProtKB-SubCell"/>
</dbReference>
<dbReference type="InterPro" id="IPR020954">
    <property type="entry name" value="Rickettsia_antigen_120kDa"/>
</dbReference>
<dbReference type="NCBIfam" id="NF038365">
    <property type="entry name" value="Sca4_fam"/>
    <property type="match status" value="1"/>
</dbReference>
<dbReference type="Pfam" id="PF12574">
    <property type="entry name" value="120_Rick_ant"/>
    <property type="match status" value="1"/>
</dbReference>